<accession>A0RA12</accession>
<evidence type="ECO:0000255" key="1">
    <source>
        <dbReference type="HAMAP-Rule" id="MF_00275"/>
    </source>
</evidence>
<keyword id="KW-1003">Cell membrane</keyword>
<keyword id="KW-0406">Ion transport</keyword>
<keyword id="KW-0472">Membrane</keyword>
<keyword id="KW-0630">Potassium</keyword>
<keyword id="KW-0633">Potassium transport</keyword>
<keyword id="KW-0812">Transmembrane</keyword>
<keyword id="KW-1133">Transmembrane helix</keyword>
<keyword id="KW-0813">Transport</keyword>
<reference key="1">
    <citation type="journal article" date="2007" name="J. Bacteriol.">
        <title>The complete genome sequence of Bacillus thuringiensis Al Hakam.</title>
        <authorList>
            <person name="Challacombe J.F."/>
            <person name="Altherr M.R."/>
            <person name="Xie G."/>
            <person name="Bhotika S.S."/>
            <person name="Brown N."/>
            <person name="Bruce D."/>
            <person name="Campbell C.S."/>
            <person name="Campbell M.L."/>
            <person name="Chen J."/>
            <person name="Chertkov O."/>
            <person name="Cleland C."/>
            <person name="Dimitrijevic M."/>
            <person name="Doggett N.A."/>
            <person name="Fawcett J.J."/>
            <person name="Glavina T."/>
            <person name="Goodwin L.A."/>
            <person name="Green L.D."/>
            <person name="Han C.S."/>
            <person name="Hill K.K."/>
            <person name="Hitchcock P."/>
            <person name="Jackson P.J."/>
            <person name="Keim P."/>
            <person name="Kewalramani A.R."/>
            <person name="Longmire J."/>
            <person name="Lucas S."/>
            <person name="Malfatti S."/>
            <person name="Martinez D."/>
            <person name="McMurry K."/>
            <person name="Meincke L.J."/>
            <person name="Misra M."/>
            <person name="Moseman B.L."/>
            <person name="Mundt M."/>
            <person name="Munk A.C."/>
            <person name="Okinaka R.T."/>
            <person name="Parson-Quintana B."/>
            <person name="Reilly L.P."/>
            <person name="Richardson P."/>
            <person name="Robinson D.L."/>
            <person name="Saunders E."/>
            <person name="Tapia R."/>
            <person name="Tesmer J.G."/>
            <person name="Thayer N."/>
            <person name="Thompson L.S."/>
            <person name="Tice H."/>
            <person name="Ticknor L.O."/>
            <person name="Wills P.L."/>
            <person name="Gilna P."/>
            <person name="Brettin T.S."/>
        </authorList>
    </citation>
    <scope>NUCLEOTIDE SEQUENCE [LARGE SCALE GENOMIC DNA]</scope>
    <source>
        <strain>Al Hakam</strain>
    </source>
</reference>
<feature type="chain" id="PRO_1000022213" description="Potassium-transporting ATPase potassium-binding subunit">
    <location>
        <begin position="1"/>
        <end position="555"/>
    </location>
</feature>
<feature type="transmembrane region" description="Helical" evidence="1">
    <location>
        <begin position="2"/>
        <end position="22"/>
    </location>
</feature>
<feature type="transmembrane region" description="Helical" evidence="1">
    <location>
        <begin position="60"/>
        <end position="80"/>
    </location>
</feature>
<feature type="transmembrane region" description="Helical" evidence="1">
    <location>
        <begin position="130"/>
        <end position="150"/>
    </location>
</feature>
<feature type="transmembrane region" description="Helical" evidence="1">
    <location>
        <begin position="173"/>
        <end position="193"/>
    </location>
</feature>
<feature type="transmembrane region" description="Helical" evidence="1">
    <location>
        <begin position="246"/>
        <end position="266"/>
    </location>
</feature>
<feature type="transmembrane region" description="Helical" evidence="1">
    <location>
        <begin position="278"/>
        <end position="298"/>
    </location>
</feature>
<feature type="transmembrane region" description="Helical" evidence="1">
    <location>
        <begin position="374"/>
        <end position="394"/>
    </location>
</feature>
<feature type="transmembrane region" description="Helical" evidence="1">
    <location>
        <begin position="412"/>
        <end position="432"/>
    </location>
</feature>
<feature type="transmembrane region" description="Helical" evidence="1">
    <location>
        <begin position="483"/>
        <end position="503"/>
    </location>
</feature>
<feature type="transmembrane region" description="Helical" evidence="1">
    <location>
        <begin position="525"/>
        <end position="545"/>
    </location>
</feature>
<proteinExistence type="inferred from homology"/>
<protein>
    <recommendedName>
        <fullName evidence="1">Potassium-transporting ATPase potassium-binding subunit</fullName>
    </recommendedName>
    <alternativeName>
        <fullName evidence="1">ATP phosphohydrolase [potassium-transporting] A chain</fullName>
    </alternativeName>
    <alternativeName>
        <fullName evidence="1">Potassium-binding and translocating subunit A</fullName>
    </alternativeName>
    <alternativeName>
        <fullName evidence="1">Potassium-translocating ATPase A chain</fullName>
    </alternativeName>
</protein>
<name>KDPA_BACAH</name>
<gene>
    <name evidence="1" type="primary">kdpA</name>
    <name type="ordered locus">BALH_0673</name>
</gene>
<sequence length="555" mass="59780">MIWVAVVITMLLFILVAKPTGIYLEKAFQGSKKLDKVFGPFEKLIFKITGVKEYNQTWKQYALSLVLLNGFMIVVVYFIFRLQGVLPLNPAHIEGMEPTLAFNTAISFMADTNLQHYSGENGLSYLSQLIGITFLMFAAPATTLALVMAFIRGLAGKELGNFFIDFTRALTRVFLPIAFMAALVFVALGVPQTLDGAVTAQTIDGAKQSILRGPVASFVAIKELGNNGGGFFGANSTHPFENPGQMSNILQMMLMMLLPTALPFTYGRMVGNKKQGRILFVSLFMVFLLGFITITTSELNGNPALNAMGIERVQGSTEGKEVRFGTVFSSLYATVTTAAETGAVNTMHDTLTPIGGLVPLVNMMLNTVYGGVGAGFVNIIMYAIIAVFISGLMVGRTPEFLGKKIEGKEMKLIAVTILFHPLLILGFSALALSTSLGTDAISHSGFHGLTQVVYEYTSSAANNGSGFEGLGDNTPFWNITTGLVMFLGRYFSLITMLAVAASLKEKTVVPETVGTFRTDNGLFGGIFIGTIVIVGALTFFPMLVLGPIAEFLTLK</sequence>
<comment type="function">
    <text evidence="1">Part of the high-affinity ATP-driven potassium transport (or Kdp) system, which catalyzes the hydrolysis of ATP coupled with the electrogenic transport of potassium into the cytoplasm. This subunit binds the extracellular potassium ions and delivers the ions to the membrane domain of KdpB through an intramembrane tunnel.</text>
</comment>
<comment type="subunit">
    <text evidence="1">The system is composed of three essential subunits: KdpA, KdpB and KdpC.</text>
</comment>
<comment type="subcellular location">
    <subcellularLocation>
        <location evidence="1">Cell membrane</location>
        <topology evidence="1">Multi-pass membrane protein</topology>
    </subcellularLocation>
</comment>
<comment type="similarity">
    <text evidence="1">Belongs to the KdpA family.</text>
</comment>
<organism>
    <name type="scientific">Bacillus thuringiensis (strain Al Hakam)</name>
    <dbReference type="NCBI Taxonomy" id="412694"/>
    <lineage>
        <taxon>Bacteria</taxon>
        <taxon>Bacillati</taxon>
        <taxon>Bacillota</taxon>
        <taxon>Bacilli</taxon>
        <taxon>Bacillales</taxon>
        <taxon>Bacillaceae</taxon>
        <taxon>Bacillus</taxon>
        <taxon>Bacillus cereus group</taxon>
    </lineage>
</organism>
<dbReference type="EMBL" id="CP000485">
    <property type="protein sequence ID" value="ABK84055.1"/>
    <property type="molecule type" value="Genomic_DNA"/>
</dbReference>
<dbReference type="RefSeq" id="WP_000638346.1">
    <property type="nucleotide sequence ID" value="NC_008600.1"/>
</dbReference>
<dbReference type="SMR" id="A0RA12"/>
<dbReference type="KEGG" id="btl:BALH_0673"/>
<dbReference type="HOGENOM" id="CLU_018614_3_0_9"/>
<dbReference type="GO" id="GO:0005886">
    <property type="term" value="C:plasma membrane"/>
    <property type="evidence" value="ECO:0007669"/>
    <property type="project" value="UniProtKB-SubCell"/>
</dbReference>
<dbReference type="GO" id="GO:0008556">
    <property type="term" value="F:P-type potassium transmembrane transporter activity"/>
    <property type="evidence" value="ECO:0007669"/>
    <property type="project" value="InterPro"/>
</dbReference>
<dbReference type="GO" id="GO:0030955">
    <property type="term" value="F:potassium ion binding"/>
    <property type="evidence" value="ECO:0007669"/>
    <property type="project" value="UniProtKB-UniRule"/>
</dbReference>
<dbReference type="HAMAP" id="MF_00275">
    <property type="entry name" value="KdpA"/>
    <property type="match status" value="1"/>
</dbReference>
<dbReference type="InterPro" id="IPR004623">
    <property type="entry name" value="KdpA"/>
</dbReference>
<dbReference type="NCBIfam" id="TIGR00680">
    <property type="entry name" value="kdpA"/>
    <property type="match status" value="1"/>
</dbReference>
<dbReference type="PANTHER" id="PTHR30607">
    <property type="entry name" value="POTASSIUM-TRANSPORTING ATPASE A CHAIN"/>
    <property type="match status" value="1"/>
</dbReference>
<dbReference type="PANTHER" id="PTHR30607:SF2">
    <property type="entry name" value="POTASSIUM-TRANSPORTING ATPASE POTASSIUM-BINDING SUBUNIT"/>
    <property type="match status" value="1"/>
</dbReference>
<dbReference type="Pfam" id="PF03814">
    <property type="entry name" value="KdpA"/>
    <property type="match status" value="1"/>
</dbReference>
<dbReference type="PIRSF" id="PIRSF001294">
    <property type="entry name" value="K_ATPaseA"/>
    <property type="match status" value="1"/>
</dbReference>